<keyword id="KW-0963">Cytoplasm</keyword>
<keyword id="KW-1185">Reference proteome</keyword>
<feature type="chain" id="PRO_0000215085" description="PF03932 family protein CutC">
    <location>
        <begin position="1"/>
        <end position="267"/>
    </location>
</feature>
<gene>
    <name evidence="1" type="primary">cutC</name>
    <name type="ordered locus">PD_0586</name>
</gene>
<sequence length="267" mass="27686">MSFDVYVMRVFGKSRGSWEAGMGVSAGLEVAAGSVASALAAQEGGAMRVELCHGLEGGGLTPSYGMLAVVRERLHIPLYVLIRPRGGDFVFSEEEMEVMCGDVECCVRLGCDGVVLGALDPAGEVDMGMMRVLIAAAGSLGVTFHRAIDVSADPGRTLEDVIALGCERVLTSGGRSSALEGAETIAALVAQAAGRVVVMPGAGVSAGNVLELRVRTGAHEFHASARSVVAARRLGAHPYIHDLGGDYDCTDADKVRQLVRLLSQGAS</sequence>
<proteinExistence type="inferred from homology"/>
<reference key="1">
    <citation type="journal article" date="2003" name="J. Bacteriol.">
        <title>Comparative analyses of the complete genome sequences of Pierce's disease and citrus variegated chlorosis strains of Xylella fastidiosa.</title>
        <authorList>
            <person name="Van Sluys M.A."/>
            <person name="de Oliveira M.C."/>
            <person name="Monteiro-Vitorello C.B."/>
            <person name="Miyaki C.Y."/>
            <person name="Furlan L.R."/>
            <person name="Camargo L.E.A."/>
            <person name="da Silva A.C.R."/>
            <person name="Moon D.H."/>
            <person name="Takita M.A."/>
            <person name="Lemos E.G.M."/>
            <person name="Machado M.A."/>
            <person name="Ferro M.I.T."/>
            <person name="da Silva F.R."/>
            <person name="Goldman M.H.S."/>
            <person name="Goldman G.H."/>
            <person name="Lemos M.V.F."/>
            <person name="El-Dorry H."/>
            <person name="Tsai S.M."/>
            <person name="Carrer H."/>
            <person name="Carraro D.M."/>
            <person name="de Oliveira R.C."/>
            <person name="Nunes L.R."/>
            <person name="Siqueira W.J."/>
            <person name="Coutinho L.L."/>
            <person name="Kimura E.T."/>
            <person name="Ferro E.S."/>
            <person name="Harakava R."/>
            <person name="Kuramae E.E."/>
            <person name="Marino C.L."/>
            <person name="Giglioti E."/>
            <person name="Abreu I.L."/>
            <person name="Alves L.M.C."/>
            <person name="do Amaral A.M."/>
            <person name="Baia G.S."/>
            <person name="Blanco S.R."/>
            <person name="Brito M.S."/>
            <person name="Cannavan F.S."/>
            <person name="Celestino A.V."/>
            <person name="da Cunha A.F."/>
            <person name="Fenille R.C."/>
            <person name="Ferro J.A."/>
            <person name="Formighieri E.F."/>
            <person name="Kishi L.T."/>
            <person name="Leoni S.G."/>
            <person name="Oliveira A.R."/>
            <person name="Rosa V.E. Jr."/>
            <person name="Sassaki F.T."/>
            <person name="Sena J.A.D."/>
            <person name="de Souza A.A."/>
            <person name="Truffi D."/>
            <person name="Tsukumo F."/>
            <person name="Yanai G.M."/>
            <person name="Zaros L.G."/>
            <person name="Civerolo E.L."/>
            <person name="Simpson A.J.G."/>
            <person name="Almeida N.F. Jr."/>
            <person name="Setubal J.C."/>
            <person name="Kitajima J.P."/>
        </authorList>
    </citation>
    <scope>NUCLEOTIDE SEQUENCE [LARGE SCALE GENOMIC DNA]</scope>
    <source>
        <strain>Temecula1 / ATCC 700964</strain>
    </source>
</reference>
<dbReference type="EMBL" id="AE009442">
    <property type="protein sequence ID" value="AAO28459.1"/>
    <property type="molecule type" value="Genomic_DNA"/>
</dbReference>
<dbReference type="SMR" id="Q87DU4"/>
<dbReference type="KEGG" id="xft:PD_0586"/>
<dbReference type="HOGENOM" id="CLU_050555_3_1_6"/>
<dbReference type="Proteomes" id="UP000002516">
    <property type="component" value="Chromosome"/>
</dbReference>
<dbReference type="GO" id="GO:0005737">
    <property type="term" value="C:cytoplasm"/>
    <property type="evidence" value="ECO:0007669"/>
    <property type="project" value="UniProtKB-SubCell"/>
</dbReference>
<dbReference type="GO" id="GO:0005507">
    <property type="term" value="F:copper ion binding"/>
    <property type="evidence" value="ECO:0007669"/>
    <property type="project" value="TreeGrafter"/>
</dbReference>
<dbReference type="FunFam" id="3.20.20.380:FF:000001">
    <property type="entry name" value="Copper homeostasis protein CutC"/>
    <property type="match status" value="1"/>
</dbReference>
<dbReference type="Gene3D" id="3.20.20.380">
    <property type="entry name" value="Copper homeostasis (CutC) domain"/>
    <property type="match status" value="1"/>
</dbReference>
<dbReference type="HAMAP" id="MF_00795">
    <property type="entry name" value="CutC"/>
    <property type="match status" value="1"/>
</dbReference>
<dbReference type="InterPro" id="IPR005627">
    <property type="entry name" value="CutC-like"/>
</dbReference>
<dbReference type="InterPro" id="IPR036822">
    <property type="entry name" value="CutC-like_dom_sf"/>
</dbReference>
<dbReference type="PANTHER" id="PTHR12598">
    <property type="entry name" value="COPPER HOMEOSTASIS PROTEIN CUTC"/>
    <property type="match status" value="1"/>
</dbReference>
<dbReference type="PANTHER" id="PTHR12598:SF0">
    <property type="entry name" value="COPPER HOMEOSTASIS PROTEIN CUTC HOMOLOG"/>
    <property type="match status" value="1"/>
</dbReference>
<dbReference type="Pfam" id="PF03932">
    <property type="entry name" value="CutC"/>
    <property type="match status" value="1"/>
</dbReference>
<dbReference type="SUPFAM" id="SSF110395">
    <property type="entry name" value="CutC-like"/>
    <property type="match status" value="1"/>
</dbReference>
<name>CUTC_XYLFT</name>
<accession>Q87DU4</accession>
<protein>
    <recommendedName>
        <fullName evidence="1">PF03932 family protein CutC</fullName>
    </recommendedName>
</protein>
<comment type="subcellular location">
    <subcellularLocation>
        <location evidence="1">Cytoplasm</location>
    </subcellularLocation>
</comment>
<comment type="similarity">
    <text evidence="1">Belongs to the CutC family.</text>
</comment>
<comment type="caution">
    <text evidence="1">Once thought to be involved in copper homeostasis, experiments in E.coli have shown this is not the case.</text>
</comment>
<evidence type="ECO:0000255" key="1">
    <source>
        <dbReference type="HAMAP-Rule" id="MF_00795"/>
    </source>
</evidence>
<organism>
    <name type="scientific">Xylella fastidiosa (strain Temecula1 / ATCC 700964)</name>
    <dbReference type="NCBI Taxonomy" id="183190"/>
    <lineage>
        <taxon>Bacteria</taxon>
        <taxon>Pseudomonadati</taxon>
        <taxon>Pseudomonadota</taxon>
        <taxon>Gammaproteobacteria</taxon>
        <taxon>Lysobacterales</taxon>
        <taxon>Lysobacteraceae</taxon>
        <taxon>Xylella</taxon>
    </lineage>
</organism>